<proteinExistence type="inferred from homology"/>
<reference key="1">
    <citation type="journal article" date="2004" name="Proc. Natl. Acad. Sci. U.S.A.">
        <title>Structural flexibility in the Burkholderia mallei genome.</title>
        <authorList>
            <person name="Nierman W.C."/>
            <person name="DeShazer D."/>
            <person name="Kim H.S."/>
            <person name="Tettelin H."/>
            <person name="Nelson K.E."/>
            <person name="Feldblyum T.V."/>
            <person name="Ulrich R.L."/>
            <person name="Ronning C.M."/>
            <person name="Brinkac L.M."/>
            <person name="Daugherty S.C."/>
            <person name="Davidsen T.D."/>
            <person name="DeBoy R.T."/>
            <person name="Dimitrov G."/>
            <person name="Dodson R.J."/>
            <person name="Durkin A.S."/>
            <person name="Gwinn M.L."/>
            <person name="Haft D.H."/>
            <person name="Khouri H.M."/>
            <person name="Kolonay J.F."/>
            <person name="Madupu R."/>
            <person name="Mohammoud Y."/>
            <person name="Nelson W.C."/>
            <person name="Radune D."/>
            <person name="Romero C.M."/>
            <person name="Sarria S."/>
            <person name="Selengut J."/>
            <person name="Shamblin C."/>
            <person name="Sullivan S.A."/>
            <person name="White O."/>
            <person name="Yu Y."/>
            <person name="Zafar N."/>
            <person name="Zhou L."/>
            <person name="Fraser C.M."/>
        </authorList>
    </citation>
    <scope>NUCLEOTIDE SEQUENCE [LARGE SCALE GENOMIC DNA]</scope>
    <source>
        <strain>ATCC 23344</strain>
    </source>
</reference>
<evidence type="ECO:0000255" key="1">
    <source>
        <dbReference type="HAMAP-Rule" id="MF_01358"/>
    </source>
</evidence>
<comment type="function">
    <text evidence="1">NDH-1 shuttles electrons from NADH, via FMN and iron-sulfur (Fe-S) centers, to quinones in the respiratory chain. The immediate electron acceptor for the enzyme in this species is believed to be ubiquinone. Couples the redox reaction to proton translocation (for every two electrons transferred, four hydrogen ions are translocated across the cytoplasmic membrane), and thus conserves the redox energy in a proton gradient.</text>
</comment>
<comment type="catalytic activity">
    <reaction evidence="1">
        <text>a quinone + NADH + 5 H(+)(in) = a quinol + NAD(+) + 4 H(+)(out)</text>
        <dbReference type="Rhea" id="RHEA:57888"/>
        <dbReference type="ChEBI" id="CHEBI:15378"/>
        <dbReference type="ChEBI" id="CHEBI:24646"/>
        <dbReference type="ChEBI" id="CHEBI:57540"/>
        <dbReference type="ChEBI" id="CHEBI:57945"/>
        <dbReference type="ChEBI" id="CHEBI:132124"/>
    </reaction>
</comment>
<comment type="subunit">
    <text evidence="1">NDH-1 is composed of 14 different subunits. Subunits NuoB, C, D, E, F, and G constitute the peripheral sector of the complex.</text>
</comment>
<comment type="subcellular location">
    <subcellularLocation>
        <location evidence="1">Cell inner membrane</location>
        <topology evidence="1">Peripheral membrane protein</topology>
        <orientation evidence="1">Cytoplasmic side</orientation>
    </subcellularLocation>
</comment>
<comment type="similarity">
    <text evidence="1">Belongs to the complex I 49 kDa subunit family.</text>
</comment>
<keyword id="KW-0997">Cell inner membrane</keyword>
<keyword id="KW-1003">Cell membrane</keyword>
<keyword id="KW-0472">Membrane</keyword>
<keyword id="KW-0520">NAD</keyword>
<keyword id="KW-0874">Quinone</keyword>
<keyword id="KW-1185">Reference proteome</keyword>
<keyword id="KW-1278">Translocase</keyword>
<keyword id="KW-0813">Transport</keyword>
<keyword id="KW-0830">Ubiquinone</keyword>
<organism>
    <name type="scientific">Burkholderia mallei (strain ATCC 23344)</name>
    <dbReference type="NCBI Taxonomy" id="243160"/>
    <lineage>
        <taxon>Bacteria</taxon>
        <taxon>Pseudomonadati</taxon>
        <taxon>Pseudomonadota</taxon>
        <taxon>Betaproteobacteria</taxon>
        <taxon>Burkholderiales</taxon>
        <taxon>Burkholderiaceae</taxon>
        <taxon>Burkholderia</taxon>
        <taxon>pseudomallei group</taxon>
    </lineage>
</organism>
<sequence>MAEIKNYTLNFGPQHPAAHGVLRLVLELDGEVIQRADPHIGLLHRATEKLAENKTFIQSVPYMDRLDYVSMMVNEHGYVLAIEKLLGIEVPERAQYIRVLFDEITRVLNHLMWIGAHALDVGAMAVFLYAFREREDLMDVYEAVSGARMHAAYYRPGGVYRDLPEAMPQYKASKIRNERALAKMNEARSGSVLDFIDDFFTRFPKCVDEYETLLTDNRIWKQRLVGIGVVSPERALQLGLTGPMIRGSGIAWDLRKKQPYEVYDRLDFDIPVGVNGDCYDRYLVRVEEMRQSTRIAKQCIEWLRKNPGPVITDNHKVAPPSRVGMKTNMEDLIHHFKLFTEGFHVPEGETYAAVEHPKGEFGIYLVSDGANKPYRLKIRAPGYAHLSALDEMARGHMIADAVTIIGTQDIVFGEIDR</sequence>
<feature type="chain" id="PRO_0000371828" description="NADH-quinone oxidoreductase subunit D">
    <location>
        <begin position="1"/>
        <end position="417"/>
    </location>
</feature>
<gene>
    <name evidence="1" type="primary">nuoD</name>
    <name type="ordered locus">BMA1826</name>
</gene>
<accession>Q62IN8</accession>
<name>NUOD_BURMA</name>
<protein>
    <recommendedName>
        <fullName evidence="1">NADH-quinone oxidoreductase subunit D</fullName>
        <ecNumber evidence="1">7.1.1.-</ecNumber>
    </recommendedName>
    <alternativeName>
        <fullName evidence="1">NADH dehydrogenase I subunit D</fullName>
    </alternativeName>
    <alternativeName>
        <fullName evidence="1">NDH-1 subunit D</fullName>
    </alternativeName>
</protein>
<dbReference type="EC" id="7.1.1.-" evidence="1"/>
<dbReference type="EMBL" id="CP000010">
    <property type="protein sequence ID" value="AAU49832.1"/>
    <property type="molecule type" value="Genomic_DNA"/>
</dbReference>
<dbReference type="RefSeq" id="WP_004185833.1">
    <property type="nucleotide sequence ID" value="NC_006348.1"/>
</dbReference>
<dbReference type="RefSeq" id="YP_103431.1">
    <property type="nucleotide sequence ID" value="NC_006348.1"/>
</dbReference>
<dbReference type="SMR" id="Q62IN8"/>
<dbReference type="KEGG" id="bma:BMA1826"/>
<dbReference type="PATRIC" id="fig|243160.12.peg.1864"/>
<dbReference type="eggNOG" id="COG0649">
    <property type="taxonomic scope" value="Bacteria"/>
</dbReference>
<dbReference type="HOGENOM" id="CLU_015134_1_1_4"/>
<dbReference type="Proteomes" id="UP000006693">
    <property type="component" value="Chromosome 1"/>
</dbReference>
<dbReference type="GO" id="GO:0005886">
    <property type="term" value="C:plasma membrane"/>
    <property type="evidence" value="ECO:0007669"/>
    <property type="project" value="UniProtKB-SubCell"/>
</dbReference>
<dbReference type="GO" id="GO:0051287">
    <property type="term" value="F:NAD binding"/>
    <property type="evidence" value="ECO:0007669"/>
    <property type="project" value="InterPro"/>
</dbReference>
<dbReference type="GO" id="GO:0050136">
    <property type="term" value="F:NADH:ubiquinone reductase (non-electrogenic) activity"/>
    <property type="evidence" value="ECO:0007669"/>
    <property type="project" value="UniProtKB-UniRule"/>
</dbReference>
<dbReference type="GO" id="GO:0048038">
    <property type="term" value="F:quinone binding"/>
    <property type="evidence" value="ECO:0007669"/>
    <property type="project" value="UniProtKB-KW"/>
</dbReference>
<dbReference type="FunFam" id="1.10.645.10:FF:000005">
    <property type="entry name" value="NADH-quinone oxidoreductase subunit D"/>
    <property type="match status" value="1"/>
</dbReference>
<dbReference type="Gene3D" id="1.10.645.10">
    <property type="entry name" value="Cytochrome-c3 Hydrogenase, chain B"/>
    <property type="match status" value="1"/>
</dbReference>
<dbReference type="HAMAP" id="MF_01358">
    <property type="entry name" value="NDH1_NuoD"/>
    <property type="match status" value="1"/>
</dbReference>
<dbReference type="InterPro" id="IPR001135">
    <property type="entry name" value="NADH_Q_OxRdtase_suD"/>
</dbReference>
<dbReference type="InterPro" id="IPR014029">
    <property type="entry name" value="NADH_UbQ_OxRdtase_49kDa_CS"/>
</dbReference>
<dbReference type="InterPro" id="IPR022885">
    <property type="entry name" value="NDH1_su_D/H"/>
</dbReference>
<dbReference type="InterPro" id="IPR029014">
    <property type="entry name" value="NiFe-Hase_large"/>
</dbReference>
<dbReference type="NCBIfam" id="TIGR01962">
    <property type="entry name" value="NuoD"/>
    <property type="match status" value="1"/>
</dbReference>
<dbReference type="NCBIfam" id="NF004739">
    <property type="entry name" value="PRK06075.1"/>
    <property type="match status" value="1"/>
</dbReference>
<dbReference type="PANTHER" id="PTHR11993:SF10">
    <property type="entry name" value="NADH DEHYDROGENASE [UBIQUINONE] IRON-SULFUR PROTEIN 2, MITOCHONDRIAL"/>
    <property type="match status" value="1"/>
</dbReference>
<dbReference type="PANTHER" id="PTHR11993">
    <property type="entry name" value="NADH-UBIQUINONE OXIDOREDUCTASE 49 KDA SUBUNIT"/>
    <property type="match status" value="1"/>
</dbReference>
<dbReference type="Pfam" id="PF00346">
    <property type="entry name" value="Complex1_49kDa"/>
    <property type="match status" value="1"/>
</dbReference>
<dbReference type="SUPFAM" id="SSF56762">
    <property type="entry name" value="HydB/Nqo4-like"/>
    <property type="match status" value="1"/>
</dbReference>
<dbReference type="PROSITE" id="PS00535">
    <property type="entry name" value="COMPLEX1_49K"/>
    <property type="match status" value="1"/>
</dbReference>